<name>EFTS_FRATH</name>
<sequence>MSNISAKLVKELRERTGAGMMECKKALVAAAGDIEKAAEEMRISGQAKADKKASRVAAEGVIEVYAADGRAILLEINSETDFVARDETFKKFAQEAVKAAHAANAKTIEEVLAAKTSNGETVEEARKSLIAKIGENIQVRRVKTVEAETLGAYIHGSKIGVVAALEGGDEDLAKDVAMHVAAANPMVVSGDQVPADVVAKEKEIFTAQAKESGKPAEIIEKMIVGRIRKFLDEVALLGQDFVKDPAIKVEKLVKDKGAKVVNFIRLDVGEGIEKKEEDFAAEVMSQIKG</sequence>
<comment type="function">
    <text evidence="1">Associates with the EF-Tu.GDP complex and induces the exchange of GDP to GTP. It remains bound to the aminoacyl-tRNA.EF-Tu.GTP complex up to the GTP hydrolysis stage on the ribosome.</text>
</comment>
<comment type="subcellular location">
    <subcellularLocation>
        <location evidence="1">Cytoplasm</location>
    </subcellularLocation>
</comment>
<comment type="similarity">
    <text evidence="1">Belongs to the EF-Ts family.</text>
</comment>
<proteinExistence type="inferred from homology"/>
<keyword id="KW-0963">Cytoplasm</keyword>
<keyword id="KW-0251">Elongation factor</keyword>
<keyword id="KW-0648">Protein biosynthesis</keyword>
<keyword id="KW-1185">Reference proteome</keyword>
<reference key="1">
    <citation type="submission" date="2006-03" db="EMBL/GenBank/DDBJ databases">
        <title>Complete genome sequence of Francisella tularensis LVS (Live Vaccine Strain).</title>
        <authorList>
            <person name="Chain P."/>
            <person name="Larimer F."/>
            <person name="Land M."/>
            <person name="Stilwagen S."/>
            <person name="Larsson P."/>
            <person name="Bearden S."/>
            <person name="Chu M."/>
            <person name="Oyston P."/>
            <person name="Forsman M."/>
            <person name="Andersson S."/>
            <person name="Lindler L."/>
            <person name="Titball R."/>
            <person name="Garcia E."/>
        </authorList>
    </citation>
    <scope>NUCLEOTIDE SEQUENCE [LARGE SCALE GENOMIC DNA]</scope>
    <source>
        <strain>LVS</strain>
    </source>
</reference>
<dbReference type="EMBL" id="AM233362">
    <property type="protein sequence ID" value="CAJ78666.1"/>
    <property type="molecule type" value="Genomic_DNA"/>
</dbReference>
<dbReference type="RefSeq" id="WP_003017693.1">
    <property type="nucleotide sequence ID" value="NZ_CP009694.1"/>
</dbReference>
<dbReference type="SMR" id="Q2A5I1"/>
<dbReference type="KEGG" id="ftl:FTL_0225"/>
<dbReference type="Proteomes" id="UP000001944">
    <property type="component" value="Chromosome"/>
</dbReference>
<dbReference type="GO" id="GO:0005737">
    <property type="term" value="C:cytoplasm"/>
    <property type="evidence" value="ECO:0007669"/>
    <property type="project" value="UniProtKB-SubCell"/>
</dbReference>
<dbReference type="GO" id="GO:0003746">
    <property type="term" value="F:translation elongation factor activity"/>
    <property type="evidence" value="ECO:0007669"/>
    <property type="project" value="UniProtKB-UniRule"/>
</dbReference>
<dbReference type="CDD" id="cd14275">
    <property type="entry name" value="UBA_EF-Ts"/>
    <property type="match status" value="1"/>
</dbReference>
<dbReference type="FunFam" id="1.10.286.20:FF:000001">
    <property type="entry name" value="Elongation factor Ts"/>
    <property type="match status" value="1"/>
</dbReference>
<dbReference type="FunFam" id="1.10.8.10:FF:000001">
    <property type="entry name" value="Elongation factor Ts"/>
    <property type="match status" value="1"/>
</dbReference>
<dbReference type="Gene3D" id="1.10.286.20">
    <property type="match status" value="1"/>
</dbReference>
<dbReference type="Gene3D" id="1.10.8.10">
    <property type="entry name" value="DNA helicase RuvA subunit, C-terminal domain"/>
    <property type="match status" value="1"/>
</dbReference>
<dbReference type="Gene3D" id="3.30.479.20">
    <property type="entry name" value="Elongation factor Ts, dimerisation domain"/>
    <property type="match status" value="2"/>
</dbReference>
<dbReference type="HAMAP" id="MF_00050">
    <property type="entry name" value="EF_Ts"/>
    <property type="match status" value="1"/>
</dbReference>
<dbReference type="InterPro" id="IPR036402">
    <property type="entry name" value="EF-Ts_dimer_sf"/>
</dbReference>
<dbReference type="InterPro" id="IPR001816">
    <property type="entry name" value="Transl_elong_EFTs/EF1B"/>
</dbReference>
<dbReference type="InterPro" id="IPR014039">
    <property type="entry name" value="Transl_elong_EFTs/EF1B_dimer"/>
</dbReference>
<dbReference type="InterPro" id="IPR018101">
    <property type="entry name" value="Transl_elong_Ts_CS"/>
</dbReference>
<dbReference type="InterPro" id="IPR009060">
    <property type="entry name" value="UBA-like_sf"/>
</dbReference>
<dbReference type="NCBIfam" id="TIGR00116">
    <property type="entry name" value="tsf"/>
    <property type="match status" value="1"/>
</dbReference>
<dbReference type="PANTHER" id="PTHR11741">
    <property type="entry name" value="ELONGATION FACTOR TS"/>
    <property type="match status" value="1"/>
</dbReference>
<dbReference type="PANTHER" id="PTHR11741:SF0">
    <property type="entry name" value="ELONGATION FACTOR TS, MITOCHONDRIAL"/>
    <property type="match status" value="1"/>
</dbReference>
<dbReference type="Pfam" id="PF00889">
    <property type="entry name" value="EF_TS"/>
    <property type="match status" value="1"/>
</dbReference>
<dbReference type="SUPFAM" id="SSF54713">
    <property type="entry name" value="Elongation factor Ts (EF-Ts), dimerisation domain"/>
    <property type="match status" value="2"/>
</dbReference>
<dbReference type="SUPFAM" id="SSF46934">
    <property type="entry name" value="UBA-like"/>
    <property type="match status" value="1"/>
</dbReference>
<dbReference type="PROSITE" id="PS01126">
    <property type="entry name" value="EF_TS_1"/>
    <property type="match status" value="1"/>
</dbReference>
<dbReference type="PROSITE" id="PS01127">
    <property type="entry name" value="EF_TS_2"/>
    <property type="match status" value="1"/>
</dbReference>
<protein>
    <recommendedName>
        <fullName evidence="1">Elongation factor Ts</fullName>
        <shortName evidence="1">EF-Ts</shortName>
    </recommendedName>
</protein>
<feature type="chain" id="PRO_0000241483" description="Elongation factor Ts">
    <location>
        <begin position="1"/>
        <end position="289"/>
    </location>
</feature>
<feature type="region of interest" description="Involved in Mg(2+) ion dislocation from EF-Tu" evidence="1">
    <location>
        <begin position="80"/>
        <end position="83"/>
    </location>
</feature>
<gene>
    <name evidence="1" type="primary">tsf</name>
    <name type="ordered locus">FTL_0225</name>
</gene>
<organism>
    <name type="scientific">Francisella tularensis subsp. holarctica (strain LVS)</name>
    <dbReference type="NCBI Taxonomy" id="376619"/>
    <lineage>
        <taxon>Bacteria</taxon>
        <taxon>Pseudomonadati</taxon>
        <taxon>Pseudomonadota</taxon>
        <taxon>Gammaproteobacteria</taxon>
        <taxon>Thiotrichales</taxon>
        <taxon>Francisellaceae</taxon>
        <taxon>Francisella</taxon>
    </lineage>
</organism>
<evidence type="ECO:0000255" key="1">
    <source>
        <dbReference type="HAMAP-Rule" id="MF_00050"/>
    </source>
</evidence>
<accession>Q2A5I1</accession>